<proteinExistence type="inferred from homology"/>
<accession>B7MFK2</accession>
<protein>
    <recommendedName>
        <fullName evidence="1">Nucleoid occlusion factor SlmA</fullName>
    </recommendedName>
</protein>
<gene>
    <name evidence="1" type="primary">slmA</name>
    <name type="ordered locus">ECS88_4055</name>
</gene>
<keyword id="KW-0131">Cell cycle</keyword>
<keyword id="KW-0132">Cell division</keyword>
<keyword id="KW-0175">Coiled coil</keyword>
<keyword id="KW-0963">Cytoplasm</keyword>
<keyword id="KW-0238">DNA-binding</keyword>
<keyword id="KW-1185">Reference proteome</keyword>
<sequence>MAEKQTAKRNRREEILQSLALMLESSDGSQRITTAKLAASVGVSEAALYRHFPSKTRMFDSLIEFIEDSLITRINLILKDEKDTTARLRLIVLLLLGFGERNPGLTRILTGHALMFEQDRLQGRINQLFERIEAQLRQVLREKRMREGEGYATDETLLASQILAFCEGMLSRFVRSEFKYRPTDDFDARWPLIAAQLQ</sequence>
<organism>
    <name type="scientific">Escherichia coli O45:K1 (strain S88 / ExPEC)</name>
    <dbReference type="NCBI Taxonomy" id="585035"/>
    <lineage>
        <taxon>Bacteria</taxon>
        <taxon>Pseudomonadati</taxon>
        <taxon>Pseudomonadota</taxon>
        <taxon>Gammaproteobacteria</taxon>
        <taxon>Enterobacterales</taxon>
        <taxon>Enterobacteriaceae</taxon>
        <taxon>Escherichia</taxon>
    </lineage>
</organism>
<name>SLMA_ECO45</name>
<dbReference type="EMBL" id="CU928161">
    <property type="protein sequence ID" value="CAR05264.1"/>
    <property type="molecule type" value="Genomic_DNA"/>
</dbReference>
<dbReference type="RefSeq" id="WP_000818598.1">
    <property type="nucleotide sequence ID" value="NC_011742.1"/>
</dbReference>
<dbReference type="SMR" id="B7MFK2"/>
<dbReference type="KEGG" id="ecz:ECS88_4055"/>
<dbReference type="HOGENOM" id="CLU_069356_5_0_6"/>
<dbReference type="Proteomes" id="UP000000747">
    <property type="component" value="Chromosome"/>
</dbReference>
<dbReference type="GO" id="GO:0043590">
    <property type="term" value="C:bacterial nucleoid"/>
    <property type="evidence" value="ECO:0007669"/>
    <property type="project" value="UniProtKB-UniRule"/>
</dbReference>
<dbReference type="GO" id="GO:0005737">
    <property type="term" value="C:cytoplasm"/>
    <property type="evidence" value="ECO:0007669"/>
    <property type="project" value="UniProtKB-UniRule"/>
</dbReference>
<dbReference type="GO" id="GO:0003700">
    <property type="term" value="F:DNA-binding transcription factor activity"/>
    <property type="evidence" value="ECO:0007669"/>
    <property type="project" value="TreeGrafter"/>
</dbReference>
<dbReference type="GO" id="GO:0000976">
    <property type="term" value="F:transcription cis-regulatory region binding"/>
    <property type="evidence" value="ECO:0007669"/>
    <property type="project" value="TreeGrafter"/>
</dbReference>
<dbReference type="GO" id="GO:0051301">
    <property type="term" value="P:cell division"/>
    <property type="evidence" value="ECO:0007669"/>
    <property type="project" value="UniProtKB-KW"/>
</dbReference>
<dbReference type="GO" id="GO:0010974">
    <property type="term" value="P:negative regulation of division septum assembly"/>
    <property type="evidence" value="ECO:0007669"/>
    <property type="project" value="InterPro"/>
</dbReference>
<dbReference type="FunFam" id="1.10.357.10:FF:000002">
    <property type="entry name" value="Nucleoid occlusion factor SlmA"/>
    <property type="match status" value="1"/>
</dbReference>
<dbReference type="Gene3D" id="1.10.357.10">
    <property type="entry name" value="Tetracycline Repressor, domain 2"/>
    <property type="match status" value="1"/>
</dbReference>
<dbReference type="HAMAP" id="MF_01839">
    <property type="entry name" value="NO_factor_SlmA"/>
    <property type="match status" value="1"/>
</dbReference>
<dbReference type="InterPro" id="IPR023772">
    <property type="entry name" value="DNA-bd_HTH_TetR-type_CS"/>
</dbReference>
<dbReference type="InterPro" id="IPR009057">
    <property type="entry name" value="Homeodomain-like_sf"/>
</dbReference>
<dbReference type="InterPro" id="IPR050109">
    <property type="entry name" value="HTH-type_TetR-like_transc_reg"/>
</dbReference>
<dbReference type="InterPro" id="IPR001647">
    <property type="entry name" value="HTH_TetR"/>
</dbReference>
<dbReference type="InterPro" id="IPR023769">
    <property type="entry name" value="NO_SlmA"/>
</dbReference>
<dbReference type="InterPro" id="IPR054580">
    <property type="entry name" value="SlmA-like_C"/>
</dbReference>
<dbReference type="InterPro" id="IPR036271">
    <property type="entry name" value="Tet_transcr_reg_TetR-rel_C_sf"/>
</dbReference>
<dbReference type="NCBIfam" id="NF007015">
    <property type="entry name" value="PRK09480.1"/>
    <property type="match status" value="1"/>
</dbReference>
<dbReference type="PANTHER" id="PTHR30055">
    <property type="entry name" value="HTH-TYPE TRANSCRIPTIONAL REGULATOR RUTR"/>
    <property type="match status" value="1"/>
</dbReference>
<dbReference type="PANTHER" id="PTHR30055:SF183">
    <property type="entry name" value="NUCLEOID OCCLUSION FACTOR SLMA"/>
    <property type="match status" value="1"/>
</dbReference>
<dbReference type="Pfam" id="PF22276">
    <property type="entry name" value="SlmA-like_C"/>
    <property type="match status" value="1"/>
</dbReference>
<dbReference type="Pfam" id="PF00440">
    <property type="entry name" value="TetR_N"/>
    <property type="match status" value="1"/>
</dbReference>
<dbReference type="SUPFAM" id="SSF46689">
    <property type="entry name" value="Homeodomain-like"/>
    <property type="match status" value="1"/>
</dbReference>
<dbReference type="SUPFAM" id="SSF48498">
    <property type="entry name" value="Tetracyclin repressor-like, C-terminal domain"/>
    <property type="match status" value="1"/>
</dbReference>
<dbReference type="PROSITE" id="PS01081">
    <property type="entry name" value="HTH_TETR_1"/>
    <property type="match status" value="1"/>
</dbReference>
<dbReference type="PROSITE" id="PS50977">
    <property type="entry name" value="HTH_TETR_2"/>
    <property type="match status" value="1"/>
</dbReference>
<feature type="chain" id="PRO_1000188379" description="Nucleoid occlusion factor SlmA">
    <location>
        <begin position="1"/>
        <end position="198"/>
    </location>
</feature>
<feature type="domain" description="HTH tetR-type" evidence="1">
    <location>
        <begin position="10"/>
        <end position="70"/>
    </location>
</feature>
<feature type="DNA-binding region" description="H-T-H motif" evidence="1">
    <location>
        <begin position="33"/>
        <end position="52"/>
    </location>
</feature>
<feature type="coiled-coil region" evidence="1">
    <location>
        <begin position="117"/>
        <end position="144"/>
    </location>
</feature>
<comment type="function">
    <text evidence="1">Required for nucleoid occlusion (NO) phenomenon, which prevents Z-ring formation and cell division over the nucleoid. Acts as a DNA-associated cell division inhibitor that binds simultaneously chromosomal DNA and FtsZ, and disrupts the assembly of FtsZ polymers. SlmA-DNA-binding sequences (SBS) are dispersed on non-Ter regions of the chromosome, preventing FtsZ polymerization at these regions.</text>
</comment>
<comment type="subunit">
    <text evidence="1">Homodimer. Interacts with FtsZ.</text>
</comment>
<comment type="subcellular location">
    <subcellularLocation>
        <location evidence="1">Cytoplasm</location>
        <location evidence="1">Nucleoid</location>
    </subcellularLocation>
</comment>
<comment type="similarity">
    <text evidence="1">Belongs to the nucleoid occlusion factor SlmA family.</text>
</comment>
<reference key="1">
    <citation type="journal article" date="2009" name="PLoS Genet.">
        <title>Organised genome dynamics in the Escherichia coli species results in highly diverse adaptive paths.</title>
        <authorList>
            <person name="Touchon M."/>
            <person name="Hoede C."/>
            <person name="Tenaillon O."/>
            <person name="Barbe V."/>
            <person name="Baeriswyl S."/>
            <person name="Bidet P."/>
            <person name="Bingen E."/>
            <person name="Bonacorsi S."/>
            <person name="Bouchier C."/>
            <person name="Bouvet O."/>
            <person name="Calteau A."/>
            <person name="Chiapello H."/>
            <person name="Clermont O."/>
            <person name="Cruveiller S."/>
            <person name="Danchin A."/>
            <person name="Diard M."/>
            <person name="Dossat C."/>
            <person name="Karoui M.E."/>
            <person name="Frapy E."/>
            <person name="Garry L."/>
            <person name="Ghigo J.M."/>
            <person name="Gilles A.M."/>
            <person name="Johnson J."/>
            <person name="Le Bouguenec C."/>
            <person name="Lescat M."/>
            <person name="Mangenot S."/>
            <person name="Martinez-Jehanne V."/>
            <person name="Matic I."/>
            <person name="Nassif X."/>
            <person name="Oztas S."/>
            <person name="Petit M.A."/>
            <person name="Pichon C."/>
            <person name="Rouy Z."/>
            <person name="Ruf C.S."/>
            <person name="Schneider D."/>
            <person name="Tourret J."/>
            <person name="Vacherie B."/>
            <person name="Vallenet D."/>
            <person name="Medigue C."/>
            <person name="Rocha E.P.C."/>
            <person name="Denamur E."/>
        </authorList>
    </citation>
    <scope>NUCLEOTIDE SEQUENCE [LARGE SCALE GENOMIC DNA]</scope>
    <source>
        <strain>S88 / ExPEC</strain>
    </source>
</reference>
<evidence type="ECO:0000255" key="1">
    <source>
        <dbReference type="HAMAP-Rule" id="MF_01839"/>
    </source>
</evidence>